<feature type="signal peptide" evidence="2">
    <location>
        <begin position="1"/>
        <end position="17"/>
    </location>
</feature>
<feature type="propeptide" id="PRO_0000027656" description="Activation peptide" evidence="2">
    <location>
        <begin position="18"/>
        <end position="32"/>
    </location>
</feature>
<feature type="chain" id="PRO_0000027657" description="Chymotrypsin-2">
    <location>
        <begin position="33"/>
        <end position="258"/>
    </location>
</feature>
<feature type="domain" description="Peptidase S1" evidence="3">
    <location>
        <begin position="33"/>
        <end position="255"/>
    </location>
</feature>
<feature type="active site" description="Charge relay system" evidence="1">
    <location>
        <position position="74"/>
    </location>
</feature>
<feature type="active site" description="Charge relay system" evidence="1">
    <location>
        <position position="119"/>
    </location>
</feature>
<feature type="active site" description="Charge relay system" evidence="1">
    <location>
        <position position="212"/>
    </location>
</feature>
<feature type="site" description="Required for specificity" evidence="1">
    <location>
        <position position="206"/>
    </location>
</feature>
<feature type="disulfide bond" evidence="3">
    <location>
        <begin position="59"/>
        <end position="75"/>
    </location>
</feature>
<feature type="disulfide bond" evidence="3">
    <location>
        <begin position="182"/>
        <end position="198"/>
    </location>
</feature>
<feature type="disulfide bond" evidence="3">
    <location>
        <begin position="208"/>
        <end position="232"/>
    </location>
</feature>
<feature type="sequence conflict" description="In Ref. 1; CAA79326/CAA83567." evidence="7" ref="1">
    <original>T</original>
    <variation>P</variation>
    <location>
        <position position="21"/>
    </location>
</feature>
<feature type="sequence conflict" description="In Ref. 1; CAA79326/CAA83567." evidence="7" ref="1">
    <original>H</original>
    <variation>N</variation>
    <location>
        <position position="28"/>
    </location>
</feature>
<feature type="sequence conflict" description="In Ref. 1; CAA79326/CAA83567." evidence="7" ref="1">
    <original>E</original>
    <variation>V</variation>
    <location>
        <position position="37"/>
    </location>
</feature>
<feature type="sequence conflict" description="In Ref. 1; CAA79326/CAA83567." evidence="7" ref="1">
    <original>G</original>
    <variation>C</variation>
    <location>
        <position position="42"/>
    </location>
</feature>
<feature type="sequence conflict" description="In Ref. 1; CAA79326/CAA83567." evidence="7" ref="1">
    <original>N</original>
    <variation>D</variation>
    <location>
        <position position="66"/>
    </location>
</feature>
<feature type="sequence conflict" description="In Ref. 1; CAA79326." evidence="7" ref="1">
    <original>P</original>
    <variation>R</variation>
    <location>
        <position position="166"/>
    </location>
</feature>
<feature type="sequence conflict" description="In Ref. 1; CAA79326/CAA83567." evidence="7" ref="1">
    <original>K</original>
    <variation>E</variation>
    <location>
        <position position="190"/>
    </location>
</feature>
<feature type="sequence conflict" description="In Ref. 1; CAA79326." evidence="7" ref="1">
    <original>LGH</original>
    <variation>FPD</variation>
    <location>
        <begin position="194"/>
        <end position="196"/>
    </location>
</feature>
<name>CTR2_ANOGA</name>
<comment type="catalytic activity">
    <reaction evidence="4 5">
        <text>Preferential cleavage: Tyr-|-Xaa, Trp-|-Xaa, Phe-|-Xaa, Leu-|-Xaa.</text>
        <dbReference type="EC" id="3.4.21.1"/>
    </reaction>
</comment>
<comment type="subcellular location">
    <subcellularLocation>
        <location evidence="6">Secreted</location>
    </subcellularLocation>
</comment>
<comment type="tissue specificity">
    <text evidence="6">After blood feeding, expression is induced in the midgut epithelium, followed by secretion into the midgut lumen.</text>
</comment>
<comment type="similarity">
    <text evidence="3">Belongs to the peptidase S1 family.</text>
</comment>
<protein>
    <recommendedName>
        <fullName>Chymotrypsin-2</fullName>
        <ecNumber>3.4.21.1</ecNumber>
    </recommendedName>
    <alternativeName>
        <fullName>AnChym2</fullName>
    </alternativeName>
</protein>
<organism>
    <name type="scientific">Anopheles gambiae</name>
    <name type="common">African malaria mosquito</name>
    <dbReference type="NCBI Taxonomy" id="7165"/>
    <lineage>
        <taxon>Eukaryota</taxon>
        <taxon>Metazoa</taxon>
        <taxon>Ecdysozoa</taxon>
        <taxon>Arthropoda</taxon>
        <taxon>Hexapoda</taxon>
        <taxon>Insecta</taxon>
        <taxon>Pterygota</taxon>
        <taxon>Neoptera</taxon>
        <taxon>Endopterygota</taxon>
        <taxon>Diptera</taxon>
        <taxon>Nematocera</taxon>
        <taxon>Culicoidea</taxon>
        <taxon>Culicidae</taxon>
        <taxon>Anophelinae</taxon>
        <taxon>Anopheles</taxon>
    </lineage>
</organism>
<sequence length="258" mass="27928">MLRKVFAVVSVLLVVSAAKVTKLVLDDHYVNRVVGGEVAKNGSAPYQVSLQVPGWGHNCGGSLLNNRWVLTAAHCLVGYEPSDLMVLVGTNSLKEGGELLKVDKLLYHSRYNRPQFHNDIGLMRLEQPVQFSELVQSVEYLEKAVPVNATVRLTGWGRTSTNGNVPTLLQSLNVVTLSNEDCKAKMGNPKNVDLGHVCTLTKAGEGACNGDSGGPLVYEGKLVGVVNFGVPCGRGFPDGFARVSYYHEWVRTTMANNS</sequence>
<keyword id="KW-0222">Digestion</keyword>
<keyword id="KW-1015">Disulfide bond</keyword>
<keyword id="KW-0378">Hydrolase</keyword>
<keyword id="KW-0645">Protease</keyword>
<keyword id="KW-1185">Reference proteome</keyword>
<keyword id="KW-0964">Secreted</keyword>
<keyword id="KW-0720">Serine protease</keyword>
<keyword id="KW-0732">Signal</keyword>
<keyword id="KW-0865">Zymogen</keyword>
<reference key="1">
    <citation type="journal article" date="2001" name="Eur. J. Biochem.">
        <title>Blood digestion in the malaria mosquito Anopheles gambiae: molecular cloning and biochemical characterization of two inducible chymotrypsins.</title>
        <authorList>
            <person name="Vizioli J."/>
            <person name="Catteruccia F."/>
            <person name="della Torre A."/>
            <person name="Reckmann I."/>
            <person name="Mueller H.M."/>
        </authorList>
    </citation>
    <scope>NUCLEOTIDE SEQUENCE [GENOMIC DNA / MRNA]</scope>
    <scope>SUBCELLULAR LOCATION</scope>
    <scope>TISSUE SPECIFICITY</scope>
    <source>
        <strain>Suakoko</strain>
        <tissue>Midgut</tissue>
    </source>
</reference>
<reference key="2">
    <citation type="journal article" date="2002" name="Science">
        <title>The genome sequence of the malaria mosquito Anopheles gambiae.</title>
        <authorList>
            <person name="Holt R.A."/>
            <person name="Subramanian G.M."/>
            <person name="Halpern A."/>
            <person name="Sutton G.G."/>
            <person name="Charlab R."/>
            <person name="Nusskern D.R."/>
            <person name="Wincker P."/>
            <person name="Clark A.G."/>
            <person name="Ribeiro J.M.C."/>
            <person name="Wides R."/>
            <person name="Salzberg S.L."/>
            <person name="Loftus B.J."/>
            <person name="Yandell M.D."/>
            <person name="Majoros W.H."/>
            <person name="Rusch D.B."/>
            <person name="Lai Z."/>
            <person name="Kraft C.L."/>
            <person name="Abril J.F."/>
            <person name="Anthouard V."/>
            <person name="Arensburger P."/>
            <person name="Atkinson P.W."/>
            <person name="Baden H."/>
            <person name="de Berardinis V."/>
            <person name="Baldwin D."/>
            <person name="Benes V."/>
            <person name="Biedler J."/>
            <person name="Blass C."/>
            <person name="Bolanos R."/>
            <person name="Boscus D."/>
            <person name="Barnstead M."/>
            <person name="Cai S."/>
            <person name="Center A."/>
            <person name="Chaturverdi K."/>
            <person name="Christophides G.K."/>
            <person name="Chrystal M.A.M."/>
            <person name="Clamp M."/>
            <person name="Cravchik A."/>
            <person name="Curwen V."/>
            <person name="Dana A."/>
            <person name="Delcher A."/>
            <person name="Dew I."/>
            <person name="Evans C.A."/>
            <person name="Flanigan M."/>
            <person name="Grundschober-Freimoser A."/>
            <person name="Friedli L."/>
            <person name="Gu Z."/>
            <person name="Guan P."/>
            <person name="Guigo R."/>
            <person name="Hillenmeyer M.E."/>
            <person name="Hladun S.L."/>
            <person name="Hogan J.R."/>
            <person name="Hong Y.S."/>
            <person name="Hoover J."/>
            <person name="Jaillon O."/>
            <person name="Ke Z."/>
            <person name="Kodira C.D."/>
            <person name="Kokoza E."/>
            <person name="Koutsos A."/>
            <person name="Letunic I."/>
            <person name="Levitsky A.A."/>
            <person name="Liang Y."/>
            <person name="Lin J.-J."/>
            <person name="Lobo N.F."/>
            <person name="Lopez J.R."/>
            <person name="Malek J.A."/>
            <person name="McIntosh T.C."/>
            <person name="Meister S."/>
            <person name="Miller J.R."/>
            <person name="Mobarry C."/>
            <person name="Mongin E."/>
            <person name="Murphy S.D."/>
            <person name="O'Brochta D.A."/>
            <person name="Pfannkoch C."/>
            <person name="Qi R."/>
            <person name="Regier M.A."/>
            <person name="Remington K."/>
            <person name="Shao H."/>
            <person name="Sharakhova M.V."/>
            <person name="Sitter C.D."/>
            <person name="Shetty J."/>
            <person name="Smith T.J."/>
            <person name="Strong R."/>
            <person name="Sun J."/>
            <person name="Thomasova D."/>
            <person name="Ton L.Q."/>
            <person name="Topalis P."/>
            <person name="Tu Z.J."/>
            <person name="Unger M.F."/>
            <person name="Walenz B."/>
            <person name="Wang A.H."/>
            <person name="Wang J."/>
            <person name="Wang M."/>
            <person name="Wang X."/>
            <person name="Woodford K.J."/>
            <person name="Wortman J.R."/>
            <person name="Wu M."/>
            <person name="Yao A."/>
            <person name="Zdobnov E.M."/>
            <person name="Zhang H."/>
            <person name="Zhao Q."/>
            <person name="Zhao S."/>
            <person name="Zhu S.C."/>
            <person name="Zhimulev I."/>
            <person name="Coluzzi M."/>
            <person name="della Torre A."/>
            <person name="Roth C.W."/>
            <person name="Louis C."/>
            <person name="Kalush F."/>
            <person name="Mural R.J."/>
            <person name="Myers E.W."/>
            <person name="Adams M.D."/>
            <person name="Smith H.O."/>
            <person name="Broder S."/>
            <person name="Gardner M.J."/>
            <person name="Fraser C.M."/>
            <person name="Birney E."/>
            <person name="Bork P."/>
            <person name="Brey P.T."/>
            <person name="Venter J.C."/>
            <person name="Weissenbach J."/>
            <person name="Kafatos F.C."/>
            <person name="Collins F.H."/>
            <person name="Hoffman S.L."/>
        </authorList>
    </citation>
    <scope>NUCLEOTIDE SEQUENCE [LARGE SCALE GENOMIC DNA]</scope>
    <source>
        <strain>PEST</strain>
    </source>
</reference>
<gene>
    <name type="primary">CHYM2</name>
    <name type="ORF">AGAP006711</name>
</gene>
<accession>Q17025</accession>
<accession>Q17026</accession>
<accession>Q7PT16</accession>
<dbReference type="EC" id="3.4.21.1"/>
<dbReference type="EMBL" id="Z18888">
    <property type="protein sequence ID" value="CAA79326.1"/>
    <property type="molecule type" value="mRNA"/>
</dbReference>
<dbReference type="EMBL" id="Z32645">
    <property type="protein sequence ID" value="CAA83567.1"/>
    <property type="molecule type" value="Genomic_DNA"/>
</dbReference>
<dbReference type="EMBL" id="AAAB01008807">
    <property type="protein sequence ID" value="EAA04684.3"/>
    <property type="molecule type" value="Genomic_DNA"/>
</dbReference>
<dbReference type="PIR" id="S44184">
    <property type="entry name" value="S44184"/>
</dbReference>
<dbReference type="RefSeq" id="XP_309032.2">
    <property type="nucleotide sequence ID" value="XM_309032.3"/>
</dbReference>
<dbReference type="SMR" id="Q17025"/>
<dbReference type="FunCoup" id="Q17025">
    <property type="interactions" value="3"/>
</dbReference>
<dbReference type="STRING" id="7165.Q17025"/>
<dbReference type="MEROPS" id="S01.166"/>
<dbReference type="PaxDb" id="7165-AGAP006711-PA"/>
<dbReference type="EnsemblMetazoa" id="AGAP006711-RA">
    <property type="protein sequence ID" value="AGAP006711-PA"/>
    <property type="gene ID" value="AGAP006711"/>
</dbReference>
<dbReference type="GeneID" id="1270347"/>
<dbReference type="KEGG" id="aga:1270347"/>
<dbReference type="VEuPathDB" id="VectorBase:AGAMI1_008148"/>
<dbReference type="VEuPathDB" id="VectorBase:AGAP006711"/>
<dbReference type="eggNOG" id="KOG3627">
    <property type="taxonomic scope" value="Eukaryota"/>
</dbReference>
<dbReference type="HOGENOM" id="CLU_006842_7_4_1"/>
<dbReference type="InParanoid" id="Q17025"/>
<dbReference type="OMA" id="CPYLMAK"/>
<dbReference type="PhylomeDB" id="Q17025"/>
<dbReference type="Proteomes" id="UP000007062">
    <property type="component" value="Chromosome 2L"/>
</dbReference>
<dbReference type="GO" id="GO:0005615">
    <property type="term" value="C:extracellular space"/>
    <property type="evidence" value="ECO:0000318"/>
    <property type="project" value="GO_Central"/>
</dbReference>
<dbReference type="GO" id="GO:0004252">
    <property type="term" value="F:serine-type endopeptidase activity"/>
    <property type="evidence" value="ECO:0007669"/>
    <property type="project" value="UniProtKB-EC"/>
</dbReference>
<dbReference type="GO" id="GO:0007586">
    <property type="term" value="P:digestion"/>
    <property type="evidence" value="ECO:0007669"/>
    <property type="project" value="UniProtKB-KW"/>
</dbReference>
<dbReference type="GO" id="GO:0045087">
    <property type="term" value="P:innate immune response"/>
    <property type="evidence" value="ECO:0000318"/>
    <property type="project" value="GO_Central"/>
</dbReference>
<dbReference type="GO" id="GO:0006508">
    <property type="term" value="P:proteolysis"/>
    <property type="evidence" value="ECO:0007669"/>
    <property type="project" value="UniProtKB-KW"/>
</dbReference>
<dbReference type="CDD" id="cd00190">
    <property type="entry name" value="Tryp_SPc"/>
    <property type="match status" value="1"/>
</dbReference>
<dbReference type="FunFam" id="2.40.10.10:FF:000047">
    <property type="entry name" value="Trypsin eta"/>
    <property type="match status" value="1"/>
</dbReference>
<dbReference type="Gene3D" id="2.40.10.10">
    <property type="entry name" value="Trypsin-like serine proteases"/>
    <property type="match status" value="2"/>
</dbReference>
<dbReference type="InterPro" id="IPR050430">
    <property type="entry name" value="Peptidase_S1"/>
</dbReference>
<dbReference type="InterPro" id="IPR009003">
    <property type="entry name" value="Peptidase_S1_PA"/>
</dbReference>
<dbReference type="InterPro" id="IPR043504">
    <property type="entry name" value="Peptidase_S1_PA_chymotrypsin"/>
</dbReference>
<dbReference type="InterPro" id="IPR001314">
    <property type="entry name" value="Peptidase_S1A"/>
</dbReference>
<dbReference type="InterPro" id="IPR001254">
    <property type="entry name" value="Trypsin_dom"/>
</dbReference>
<dbReference type="InterPro" id="IPR018114">
    <property type="entry name" value="TRYPSIN_HIS"/>
</dbReference>
<dbReference type="InterPro" id="IPR033116">
    <property type="entry name" value="TRYPSIN_SER"/>
</dbReference>
<dbReference type="PANTHER" id="PTHR24276:SF96">
    <property type="entry name" value="PEPTIDASE S1 DOMAIN-CONTAINING PROTEIN"/>
    <property type="match status" value="1"/>
</dbReference>
<dbReference type="PANTHER" id="PTHR24276">
    <property type="entry name" value="POLYSERASE-RELATED"/>
    <property type="match status" value="1"/>
</dbReference>
<dbReference type="Pfam" id="PF00089">
    <property type="entry name" value="Trypsin"/>
    <property type="match status" value="1"/>
</dbReference>
<dbReference type="PRINTS" id="PR00722">
    <property type="entry name" value="CHYMOTRYPSIN"/>
</dbReference>
<dbReference type="SMART" id="SM00020">
    <property type="entry name" value="Tryp_SPc"/>
    <property type="match status" value="1"/>
</dbReference>
<dbReference type="SUPFAM" id="SSF50494">
    <property type="entry name" value="Trypsin-like serine proteases"/>
    <property type="match status" value="1"/>
</dbReference>
<dbReference type="PROSITE" id="PS50240">
    <property type="entry name" value="TRYPSIN_DOM"/>
    <property type="match status" value="1"/>
</dbReference>
<dbReference type="PROSITE" id="PS00134">
    <property type="entry name" value="TRYPSIN_HIS"/>
    <property type="match status" value="1"/>
</dbReference>
<dbReference type="PROSITE" id="PS00135">
    <property type="entry name" value="TRYPSIN_SER"/>
    <property type="match status" value="1"/>
</dbReference>
<proteinExistence type="evidence at transcript level"/>
<evidence type="ECO:0000250" key="1"/>
<evidence type="ECO:0000255" key="2"/>
<evidence type="ECO:0000255" key="3">
    <source>
        <dbReference type="PROSITE-ProRule" id="PRU00274"/>
    </source>
</evidence>
<evidence type="ECO:0000255" key="4">
    <source>
        <dbReference type="PROSITE-ProRule" id="PRU10078"/>
    </source>
</evidence>
<evidence type="ECO:0000255" key="5">
    <source>
        <dbReference type="PROSITE-ProRule" id="PRU10079"/>
    </source>
</evidence>
<evidence type="ECO:0000269" key="6">
    <source>
    </source>
</evidence>
<evidence type="ECO:0000305" key="7"/>